<comment type="function">
    <text evidence="1">Transfers and isomerizes the ribose moiety from AdoMet to the 7-aminomethyl group of 7-deazaguanine (preQ1-tRNA) to give epoxyqueuosine (oQ-tRNA).</text>
</comment>
<comment type="catalytic activity">
    <reaction evidence="1">
        <text>7-aminomethyl-7-carbaguanosine(34) in tRNA + S-adenosyl-L-methionine = epoxyqueuosine(34) in tRNA + adenine + L-methionine + 2 H(+)</text>
        <dbReference type="Rhea" id="RHEA:32155"/>
        <dbReference type="Rhea" id="RHEA-COMP:10342"/>
        <dbReference type="Rhea" id="RHEA-COMP:18582"/>
        <dbReference type="ChEBI" id="CHEBI:15378"/>
        <dbReference type="ChEBI" id="CHEBI:16708"/>
        <dbReference type="ChEBI" id="CHEBI:57844"/>
        <dbReference type="ChEBI" id="CHEBI:59789"/>
        <dbReference type="ChEBI" id="CHEBI:82833"/>
        <dbReference type="ChEBI" id="CHEBI:194443"/>
        <dbReference type="EC" id="2.4.99.17"/>
    </reaction>
</comment>
<comment type="pathway">
    <text evidence="1">tRNA modification; tRNA-queuosine biosynthesis.</text>
</comment>
<comment type="subunit">
    <text evidence="1">Monomer.</text>
</comment>
<comment type="subcellular location">
    <subcellularLocation>
        <location evidence="1">Cytoplasm</location>
    </subcellularLocation>
</comment>
<comment type="similarity">
    <text evidence="1">Belongs to the QueA family.</text>
</comment>
<proteinExistence type="inferred from homology"/>
<feature type="chain" id="PRO_1000202955" description="S-adenosylmethionine:tRNA ribosyltransferase-isomerase">
    <location>
        <begin position="1"/>
        <end position="342"/>
    </location>
</feature>
<reference key="1">
    <citation type="journal article" date="2012" name="BMC Genomics">
        <title>Comparative genomics and transcriptomics of lineages I, II, and III strains of Listeria monocytogenes.</title>
        <authorList>
            <person name="Hain T."/>
            <person name="Ghai R."/>
            <person name="Billion A."/>
            <person name="Kuenne C.T."/>
            <person name="Steinweg C."/>
            <person name="Izar B."/>
            <person name="Mohamed W."/>
            <person name="Mraheil M."/>
            <person name="Domann E."/>
            <person name="Schaffrath S."/>
            <person name="Karst U."/>
            <person name="Goesmann A."/>
            <person name="Oehm S."/>
            <person name="Puhler A."/>
            <person name="Merkl R."/>
            <person name="Vorwerk S."/>
            <person name="Glaser P."/>
            <person name="Garrido P."/>
            <person name="Rusniok C."/>
            <person name="Buchrieser C."/>
            <person name="Goebel W."/>
            <person name="Chakraborty T."/>
        </authorList>
    </citation>
    <scope>NUCLEOTIDE SEQUENCE [LARGE SCALE GENOMIC DNA]</scope>
    <source>
        <strain>CLIP80459</strain>
    </source>
</reference>
<evidence type="ECO:0000255" key="1">
    <source>
        <dbReference type="HAMAP-Rule" id="MF_00113"/>
    </source>
</evidence>
<accession>C1KVH8</accession>
<name>QUEA_LISMC</name>
<organism>
    <name type="scientific">Listeria monocytogenes serotype 4b (strain CLIP80459)</name>
    <dbReference type="NCBI Taxonomy" id="568819"/>
    <lineage>
        <taxon>Bacteria</taxon>
        <taxon>Bacillati</taxon>
        <taxon>Bacillota</taxon>
        <taxon>Bacilli</taxon>
        <taxon>Bacillales</taxon>
        <taxon>Listeriaceae</taxon>
        <taxon>Listeria</taxon>
    </lineage>
</organism>
<gene>
    <name evidence="1" type="primary">queA</name>
    <name type="ordered locus">Lm4b_01541</name>
</gene>
<sequence length="342" mass="38183">MKVEDFDFDLPEELIAQTPLLDRTSSRLMVLDKKSGDIKDQHFTDIISYLNEGDALVLNDTRVLPARLHGIKDETGAHIEVLLLKQKEGNAWETLVKPAKRIRKGATITFGDGALKAICLEELEHGGRILEFSYEGIFYEVLEQLGEMPLPPYIKEQLADQDRYQTVYAKENGSAAAPTAGLHFTEDLLAKISAKGVEIIFVTLHVGLGTFRPVDVEDTANHKMHSEFYRLTEESAERINKIKAQGGKVVAVGTTSIRTLETIASRHDGKLVAESGWTEIFISPGYTFQAVDALITNFHLPKSTLIMLVSALSDRTKILAAYNHAVEEQYRFFSFGDAMFIH</sequence>
<dbReference type="EC" id="2.4.99.17" evidence="1"/>
<dbReference type="EMBL" id="FM242711">
    <property type="protein sequence ID" value="CAS05303.1"/>
    <property type="molecule type" value="Genomic_DNA"/>
</dbReference>
<dbReference type="RefSeq" id="WP_003727397.1">
    <property type="nucleotide sequence ID" value="NC_012488.1"/>
</dbReference>
<dbReference type="SMR" id="C1KVH8"/>
<dbReference type="KEGG" id="lmc:Lm4b_01541"/>
<dbReference type="HOGENOM" id="CLU_039110_1_0_9"/>
<dbReference type="UniPathway" id="UPA00392"/>
<dbReference type="GO" id="GO:0005737">
    <property type="term" value="C:cytoplasm"/>
    <property type="evidence" value="ECO:0007669"/>
    <property type="project" value="UniProtKB-SubCell"/>
</dbReference>
<dbReference type="GO" id="GO:0051075">
    <property type="term" value="F:S-adenosylmethionine:tRNA ribosyltransferase-isomerase activity"/>
    <property type="evidence" value="ECO:0007669"/>
    <property type="project" value="UniProtKB-EC"/>
</dbReference>
<dbReference type="GO" id="GO:0008616">
    <property type="term" value="P:queuosine biosynthetic process"/>
    <property type="evidence" value="ECO:0007669"/>
    <property type="project" value="UniProtKB-UniRule"/>
</dbReference>
<dbReference type="GO" id="GO:0002099">
    <property type="term" value="P:tRNA wobble guanine modification"/>
    <property type="evidence" value="ECO:0007669"/>
    <property type="project" value="TreeGrafter"/>
</dbReference>
<dbReference type="FunFam" id="2.40.10.240:FF:000002">
    <property type="entry name" value="S-adenosylmethionine:tRNA ribosyltransferase-isomerase"/>
    <property type="match status" value="1"/>
</dbReference>
<dbReference type="FunFam" id="3.40.1780.10:FF:000001">
    <property type="entry name" value="S-adenosylmethionine:tRNA ribosyltransferase-isomerase"/>
    <property type="match status" value="1"/>
</dbReference>
<dbReference type="Gene3D" id="2.40.10.240">
    <property type="entry name" value="QueA-like"/>
    <property type="match status" value="1"/>
</dbReference>
<dbReference type="Gene3D" id="3.40.1780.10">
    <property type="entry name" value="QueA-like"/>
    <property type="match status" value="1"/>
</dbReference>
<dbReference type="HAMAP" id="MF_00113">
    <property type="entry name" value="QueA"/>
    <property type="match status" value="1"/>
</dbReference>
<dbReference type="InterPro" id="IPR003699">
    <property type="entry name" value="QueA"/>
</dbReference>
<dbReference type="InterPro" id="IPR042118">
    <property type="entry name" value="QueA_dom1"/>
</dbReference>
<dbReference type="InterPro" id="IPR042119">
    <property type="entry name" value="QueA_dom2"/>
</dbReference>
<dbReference type="InterPro" id="IPR036100">
    <property type="entry name" value="QueA_sf"/>
</dbReference>
<dbReference type="NCBIfam" id="NF001140">
    <property type="entry name" value="PRK00147.1"/>
    <property type="match status" value="1"/>
</dbReference>
<dbReference type="NCBIfam" id="TIGR00113">
    <property type="entry name" value="queA"/>
    <property type="match status" value="1"/>
</dbReference>
<dbReference type="PANTHER" id="PTHR30307">
    <property type="entry name" value="S-ADENOSYLMETHIONINE:TRNA RIBOSYLTRANSFERASE-ISOMERASE"/>
    <property type="match status" value="1"/>
</dbReference>
<dbReference type="PANTHER" id="PTHR30307:SF0">
    <property type="entry name" value="S-ADENOSYLMETHIONINE:TRNA RIBOSYLTRANSFERASE-ISOMERASE"/>
    <property type="match status" value="1"/>
</dbReference>
<dbReference type="Pfam" id="PF02547">
    <property type="entry name" value="Queuosine_synth"/>
    <property type="match status" value="1"/>
</dbReference>
<dbReference type="SUPFAM" id="SSF111337">
    <property type="entry name" value="QueA-like"/>
    <property type="match status" value="1"/>
</dbReference>
<protein>
    <recommendedName>
        <fullName evidence="1">S-adenosylmethionine:tRNA ribosyltransferase-isomerase</fullName>
        <ecNumber evidence="1">2.4.99.17</ecNumber>
    </recommendedName>
    <alternativeName>
        <fullName evidence="1">Queuosine biosynthesis protein QueA</fullName>
    </alternativeName>
</protein>
<keyword id="KW-0963">Cytoplasm</keyword>
<keyword id="KW-0671">Queuosine biosynthesis</keyword>
<keyword id="KW-0949">S-adenosyl-L-methionine</keyword>
<keyword id="KW-0808">Transferase</keyword>